<evidence type="ECO:0000250" key="1"/>
<evidence type="ECO:0000255" key="2"/>
<evidence type="ECO:0000305" key="3"/>
<feature type="signal peptide" evidence="2">
    <location>
        <begin position="1"/>
        <end position="31"/>
    </location>
</feature>
<feature type="chain" id="PRO_0000039321" description="Fusion glycoprotein F0">
    <location>
        <begin position="32"/>
        <end position="553"/>
    </location>
</feature>
<feature type="chain" id="PRO_0000039322" description="Fusion glycoprotein F2">
    <location>
        <begin position="32"/>
        <end position="116"/>
    </location>
</feature>
<feature type="chain" id="PRO_0000039323" description="Fusion glycoprotein F1">
    <location>
        <begin position="117"/>
        <end position="553"/>
    </location>
</feature>
<feature type="topological domain" description="Extracellular" evidence="1">
    <location>
        <begin position="32"/>
        <end position="500"/>
    </location>
</feature>
<feature type="transmembrane region" description="Helical" evidence="1">
    <location>
        <begin position="501"/>
        <end position="521"/>
    </location>
</feature>
<feature type="topological domain" description="Cytoplasmic" evidence="1">
    <location>
        <begin position="522"/>
        <end position="553"/>
    </location>
</feature>
<feature type="region of interest" description="Fusion peptide" evidence="1">
    <location>
        <begin position="117"/>
        <end position="141"/>
    </location>
</feature>
<feature type="coiled-coil region" evidence="2">
    <location>
        <begin position="142"/>
        <end position="170"/>
    </location>
</feature>
<feature type="coiled-coil region" evidence="2">
    <location>
        <begin position="466"/>
        <end position="491"/>
    </location>
</feature>
<feature type="site" description="Cleavage; by host" evidence="1">
    <location>
        <begin position="116"/>
        <end position="117"/>
    </location>
</feature>
<feature type="lipid moiety-binding region" description="S-palmitoyl cysteine; by host" evidence="2">
    <location>
        <position position="523"/>
    </location>
</feature>
<feature type="glycosylation site" description="N-linked (GlcNAc...) asparagine; by host" evidence="2">
    <location>
        <position position="85"/>
    </location>
</feature>
<feature type="glycosylation site" description="N-linked (GlcNAc...) asparagine; by host" evidence="2">
    <location>
        <position position="191"/>
    </location>
</feature>
<feature type="glycosylation site" description="N-linked (GlcNAc...) asparagine; by host" evidence="2">
    <location>
        <position position="366"/>
    </location>
</feature>
<feature type="glycosylation site" description="N-linked (GlcNAc...) asparagine; by host" evidence="2">
    <location>
        <position position="447"/>
    </location>
</feature>
<feature type="glycosylation site" description="N-linked (GlcNAc...) asparagine; by host" evidence="2">
    <location>
        <position position="471"/>
    </location>
</feature>
<feature type="disulfide bond" description="Interchain (between F2 and F1 chains)" evidence="1">
    <location>
        <begin position="76"/>
        <end position="199"/>
    </location>
</feature>
<feature type="disulfide bond" evidence="1">
    <location>
        <begin position="338"/>
        <end position="347"/>
    </location>
</feature>
<feature type="disulfide bond" evidence="1">
    <location>
        <begin position="362"/>
        <end position="370"/>
    </location>
</feature>
<name>FUS_NDVT</name>
<comment type="function">
    <text evidence="1">Class I viral fusion protein. Under the current model, the protein has at least 3 conformational states: pre-fusion native state, pre-hairpin intermediate state, and post-fusion hairpin state. During viral and plasma cell membrane fusion, the heptad repeat (HR) regions assume a trimer-of-hairpins structure, positioning the fusion peptide in close proximity to the C-terminal region of the ectodomain. The formation of this structure appears to drive apposition and subsequent fusion of viral and plasma cell membranes. Directs fusion of viral and cellular membranes leading to delivery of the nucleocapsid into the cytoplasm. This fusion is pH independent and occurs directly at the outer cell membrane. The trimer of F1-F2 (F protein) probably interacts with HN at the virion surface. Upon HN binding to its cellular receptor, the hydrophobic fusion peptide is unmasked and interacts with the cellular membrane, inducing the fusion between cell and virion membranes. Later in infection, F proteins expressed at the plasma membrane of infected cells could mediate fusion with adjacent cells to form syncytia, a cytopathic effect that could lead to tissue necrosis (By similarity).</text>
</comment>
<comment type="subunit">
    <text evidence="1">Homotrimer of disulfide-linked F1-F2.</text>
</comment>
<comment type="subcellular location">
    <subcellularLocation>
        <location evidence="1">Virion membrane</location>
        <topology evidence="1">Single-pass type I membrane protein</topology>
    </subcellularLocation>
    <subcellularLocation>
        <location evidence="1">Host cell membrane</location>
        <topology evidence="1">Single-pass membrane protein</topology>
    </subcellularLocation>
</comment>
<comment type="PTM">
    <text evidence="1">The inactive precursor F0 is glycosylated and proteolytically cleaved into F1 and F2 to be functionally active. The cleavage is mediated by cellular proteases during the transport and maturation of the polypeptide (By similarity).</text>
</comment>
<comment type="similarity">
    <text evidence="3">Belongs to the paramyxoviruses fusion glycoprotein family.</text>
</comment>
<organismHost>
    <name type="scientific">Gallus gallus</name>
    <name type="common">Chicken</name>
    <dbReference type="NCBI Taxonomy" id="9031"/>
</organismHost>
<reference key="1">
    <citation type="journal article" date="1990" name="J. Virol.">
        <title>Newcastle disease virus fusion protein expressed in a fowlpox virus recombinant confers protection in chickens.</title>
        <authorList>
            <person name="Taylor J."/>
            <person name="Edbauer C."/>
            <person name="Rey-Senelonge A."/>
            <person name="Bouquet J.F."/>
            <person name="Norton E."/>
            <person name="Goebel S.J."/>
            <person name="Desmettre P."/>
            <person name="Paoletti E."/>
        </authorList>
    </citation>
    <scope>NUCLEOTIDE SEQUENCE [GENOMIC RNA]</scope>
</reference>
<protein>
    <recommendedName>
        <fullName>Fusion glycoprotein F0</fullName>
    </recommendedName>
    <component>
        <recommendedName>
            <fullName>Fusion glycoprotein F2</fullName>
        </recommendedName>
    </component>
    <component>
        <recommendedName>
            <fullName>Fusion glycoprotein F1</fullName>
        </recommendedName>
    </component>
</protein>
<gene>
    <name type="primary">F</name>
</gene>
<sequence>MGSRSSTRIPVPLMLIIRTALTLSCIRLTSSLDGRPLAAAGIVVTGDKAVNIYTSSQTGSIIVKLLPNMPKDKEVCAKAPLEAYNRTLTTLLTPLGDSIRRIQESVTTSGGRRQRRFIGAIIGSVALGVATAAQITAASALIQANQNAANILRLKESIAATNEAVHEVTDGLSQLAVAVGKMQQFVNDQFNNTAQELDCIKIAQQVGVELNLYLTELTTVFGPQITSPALTQLTIQALYNLAGGNMDYLLTKLGVGNNQLSSLIGSGLITGNPILYDSQTQILGIQVTLPSVGNLNNMRATYLETLSVSTTKGFASALVPKVVTQVGSVIEELDTSYCIGTDLDLYCTRIVTFPMSPGIYSCLSGNTSACMYSKTEGALTTPYMALKGSVIANCKLTTCRCADPPGIISQNYGEAVSLIDRHSCNVLSLDGITLRLSGEFDATYQKNISILDSQVIVTGNLDISTELGNVNNSISNALNKLEESNSKLDKVNVKLTSTSALITYIVLTVISLVFGVLSLVLACYLMYKQKAQQKTLLWLGNNTLDQMRATTKI</sequence>
<proteinExistence type="inferred from homology"/>
<organism>
    <name type="scientific">Newcastle disease virus (strain Texas)</name>
    <name type="common">NDV</name>
    <dbReference type="NCBI Taxonomy" id="11188"/>
    <lineage>
        <taxon>Viruses</taxon>
        <taxon>Riboviria</taxon>
        <taxon>Orthornavirae</taxon>
        <taxon>Negarnaviricota</taxon>
        <taxon>Haploviricotina</taxon>
        <taxon>Monjiviricetes</taxon>
        <taxon>Mononegavirales</taxon>
        <taxon>Paramyxoviridae</taxon>
        <taxon>Avulavirinae</taxon>
        <taxon>Orthoavulavirus</taxon>
        <taxon>Orthoavulavirus javaense</taxon>
        <taxon>Avian paramyxovirus 1</taxon>
    </lineage>
</organism>
<accession>P26628</accession>
<dbReference type="EMBL" id="M33855">
    <property type="protein sequence ID" value="AAA46675.1"/>
    <property type="molecule type" value="Genomic_RNA"/>
</dbReference>
<dbReference type="PIR" id="A34663">
    <property type="entry name" value="VGNZTE"/>
</dbReference>
<dbReference type="SMR" id="P26628"/>
<dbReference type="GlyCosmos" id="P26628">
    <property type="glycosylation" value="5 sites, No reported glycans"/>
</dbReference>
<dbReference type="GO" id="GO:0020002">
    <property type="term" value="C:host cell plasma membrane"/>
    <property type="evidence" value="ECO:0007669"/>
    <property type="project" value="UniProtKB-SubCell"/>
</dbReference>
<dbReference type="GO" id="GO:0016020">
    <property type="term" value="C:membrane"/>
    <property type="evidence" value="ECO:0007669"/>
    <property type="project" value="UniProtKB-KW"/>
</dbReference>
<dbReference type="GO" id="GO:0019031">
    <property type="term" value="C:viral envelope"/>
    <property type="evidence" value="ECO:0007669"/>
    <property type="project" value="UniProtKB-KW"/>
</dbReference>
<dbReference type="GO" id="GO:0055036">
    <property type="term" value="C:virion membrane"/>
    <property type="evidence" value="ECO:0007669"/>
    <property type="project" value="UniProtKB-SubCell"/>
</dbReference>
<dbReference type="GO" id="GO:0019064">
    <property type="term" value="P:fusion of virus membrane with host plasma membrane"/>
    <property type="evidence" value="ECO:0007669"/>
    <property type="project" value="UniProtKB-KW"/>
</dbReference>
<dbReference type="GO" id="GO:0046718">
    <property type="term" value="P:symbiont entry into host cell"/>
    <property type="evidence" value="ECO:0007669"/>
    <property type="project" value="UniProtKB-KW"/>
</dbReference>
<dbReference type="Gene3D" id="1.10.287.2480">
    <property type="match status" value="1"/>
</dbReference>
<dbReference type="Gene3D" id="6.10.10.110">
    <property type="match status" value="1"/>
</dbReference>
<dbReference type="Gene3D" id="2.60.40.1690">
    <property type="entry name" value="Head and neck region of the ectodomain of NDV fusion glycoprotein"/>
    <property type="match status" value="1"/>
</dbReference>
<dbReference type="Gene3D" id="2.40.490.10">
    <property type="entry name" value="Newcastle disease virus like domain"/>
    <property type="match status" value="1"/>
</dbReference>
<dbReference type="InterPro" id="IPR000776">
    <property type="entry name" value="Fusion_F0_Paramyxovir"/>
</dbReference>
<dbReference type="Pfam" id="PF00523">
    <property type="entry name" value="Fusion_gly"/>
    <property type="match status" value="1"/>
</dbReference>
<dbReference type="SUPFAM" id="SSF69922">
    <property type="entry name" value="Head and neck region of the ectodomain of NDV fusion glycoprotein"/>
    <property type="match status" value="1"/>
</dbReference>
<dbReference type="SUPFAM" id="SSF58069">
    <property type="entry name" value="Virus ectodomain"/>
    <property type="match status" value="1"/>
</dbReference>
<keyword id="KW-0165">Cleavage on pair of basic residues</keyword>
<keyword id="KW-0175">Coiled coil</keyword>
<keyword id="KW-1015">Disulfide bond</keyword>
<keyword id="KW-1169">Fusion of virus membrane with host cell membrane</keyword>
<keyword id="KW-1168">Fusion of virus membrane with host membrane</keyword>
<keyword id="KW-0325">Glycoprotein</keyword>
<keyword id="KW-1032">Host cell membrane</keyword>
<keyword id="KW-1043">Host membrane</keyword>
<keyword id="KW-0449">Lipoprotein</keyword>
<keyword id="KW-0472">Membrane</keyword>
<keyword id="KW-0564">Palmitate</keyword>
<keyword id="KW-0732">Signal</keyword>
<keyword id="KW-0812">Transmembrane</keyword>
<keyword id="KW-1133">Transmembrane helix</keyword>
<keyword id="KW-0261">Viral envelope protein</keyword>
<keyword id="KW-1162">Viral penetration into host cytoplasm</keyword>
<keyword id="KW-0946">Virion</keyword>
<keyword id="KW-1160">Virus entry into host cell</keyword>